<proteinExistence type="evidence at transcript level"/>
<organism evidence="6">
    <name type="scientific">Mesocricetus auratus</name>
    <name type="common">Golden hamster</name>
    <dbReference type="NCBI Taxonomy" id="10036"/>
    <lineage>
        <taxon>Eukaryota</taxon>
        <taxon>Metazoa</taxon>
        <taxon>Chordata</taxon>
        <taxon>Craniata</taxon>
        <taxon>Vertebrata</taxon>
        <taxon>Euteleostomi</taxon>
        <taxon>Mammalia</taxon>
        <taxon>Eutheria</taxon>
        <taxon>Euarchontoglires</taxon>
        <taxon>Glires</taxon>
        <taxon>Rodentia</taxon>
        <taxon>Myomorpha</taxon>
        <taxon>Muroidea</taxon>
        <taxon>Cricetidae</taxon>
        <taxon>Cricetinae</taxon>
        <taxon>Mesocricetus</taxon>
    </lineage>
</organism>
<name>GNPI1_MESAU</name>
<reference key="1">
    <citation type="journal article" date="1996" name="Nature">
        <title>Calcium oscillations in mammalian eggs triggered by a soluble sperm protein.</title>
        <authorList>
            <person name="Parrington J."/>
            <person name="Swann K."/>
            <person name="Shevchenko V.I."/>
            <person name="Sesay A.K."/>
            <person name="Lai F.A."/>
        </authorList>
    </citation>
    <scope>NUCLEOTIDE SEQUENCE [MRNA]</scope>
    <scope>FUNCTION</scope>
    <scope>TISSUE SPECIFICITY</scope>
    <source>
        <tissue>Testis</tissue>
    </source>
</reference>
<sequence length="289" mass="32607">MKLIILEHYSQASEWAAKYIRNRIIQFNPGPDKYFTMGLPTGSTPLGCYQKLIEYYKNGDLSFKYVKTFNMDEYVGLPREHPESYHSFMWNNFFKHIDIHPENTHILDGNAADLQAECDAFEEKIRAAGGIELFVGGIGPDGHVAFNEPGSSLVSRTRVKTLAMDTILANARFFDGDLAKVPTMALTVGVGTVMDAREVMILITGAHKAFALYKAIEEGVNHMWTVSAFQQHPRTVFVCDEDATLELKVKTVKYFKGLMLVHNKLVDPLYSIKEKEIQKSQAAKKPYSD</sequence>
<dbReference type="EC" id="3.5.99.6" evidence="3"/>
<dbReference type="EMBL" id="X94699">
    <property type="protein sequence ID" value="CAA64360.1"/>
    <property type="molecule type" value="mRNA"/>
</dbReference>
<dbReference type="PIR" id="S68445">
    <property type="entry name" value="S68445"/>
</dbReference>
<dbReference type="RefSeq" id="NP_001268528.1">
    <property type="nucleotide sequence ID" value="NM_001281599.1"/>
</dbReference>
<dbReference type="SMR" id="Q64422"/>
<dbReference type="STRING" id="10036.ENSMAUP00000014126"/>
<dbReference type="Ensembl" id="ENSMAUT00000018041">
    <property type="protein sequence ID" value="ENSMAUP00000014126"/>
    <property type="gene ID" value="ENSMAUG00000013980"/>
</dbReference>
<dbReference type="GeneID" id="101825394"/>
<dbReference type="KEGG" id="maua:101825394"/>
<dbReference type="CTD" id="10007"/>
<dbReference type="eggNOG" id="KOG3148">
    <property type="taxonomic scope" value="Eukaryota"/>
</dbReference>
<dbReference type="OrthoDB" id="7663298at2759"/>
<dbReference type="UniPathway" id="UPA00113">
    <property type="reaction ID" value="UER00528"/>
</dbReference>
<dbReference type="Proteomes" id="UP000189706">
    <property type="component" value="Unplaced"/>
</dbReference>
<dbReference type="GO" id="GO:0005737">
    <property type="term" value="C:cytoplasm"/>
    <property type="evidence" value="ECO:0000250"/>
    <property type="project" value="UniProtKB"/>
</dbReference>
<dbReference type="GO" id="GO:0004342">
    <property type="term" value="F:glucosamine-6-phosphate deaminase activity"/>
    <property type="evidence" value="ECO:0000250"/>
    <property type="project" value="UniProtKB"/>
</dbReference>
<dbReference type="GO" id="GO:0042802">
    <property type="term" value="F:identical protein binding"/>
    <property type="evidence" value="ECO:0007669"/>
    <property type="project" value="TreeGrafter"/>
</dbReference>
<dbReference type="GO" id="GO:0016853">
    <property type="term" value="F:isomerase activity"/>
    <property type="evidence" value="ECO:0007669"/>
    <property type="project" value="UniProtKB-KW"/>
</dbReference>
<dbReference type="GO" id="GO:0005975">
    <property type="term" value="P:carbohydrate metabolic process"/>
    <property type="evidence" value="ECO:0007669"/>
    <property type="project" value="InterPro"/>
</dbReference>
<dbReference type="GO" id="GO:0006091">
    <property type="term" value="P:generation of precursor metabolites and energy"/>
    <property type="evidence" value="ECO:0000250"/>
    <property type="project" value="UniProtKB"/>
</dbReference>
<dbReference type="GO" id="GO:0006043">
    <property type="term" value="P:glucosamine catabolic process"/>
    <property type="evidence" value="ECO:0000250"/>
    <property type="project" value="UniProtKB"/>
</dbReference>
<dbReference type="GO" id="GO:0006046">
    <property type="term" value="P:N-acetylglucosamine catabolic process"/>
    <property type="evidence" value="ECO:0007669"/>
    <property type="project" value="TreeGrafter"/>
</dbReference>
<dbReference type="GO" id="GO:0019262">
    <property type="term" value="P:N-acetylneuraminate catabolic process"/>
    <property type="evidence" value="ECO:0007669"/>
    <property type="project" value="TreeGrafter"/>
</dbReference>
<dbReference type="GO" id="GO:0006048">
    <property type="term" value="P:UDP-N-acetylglucosamine biosynthetic process"/>
    <property type="evidence" value="ECO:0000250"/>
    <property type="project" value="UniProtKB"/>
</dbReference>
<dbReference type="CDD" id="cd01399">
    <property type="entry name" value="GlcN6P_deaminase"/>
    <property type="match status" value="1"/>
</dbReference>
<dbReference type="FunFam" id="3.40.50.1360:FF:000004">
    <property type="entry name" value="Glucosamine-6-phosphate isomerase"/>
    <property type="match status" value="1"/>
</dbReference>
<dbReference type="Gene3D" id="3.40.50.1360">
    <property type="match status" value="1"/>
</dbReference>
<dbReference type="HAMAP" id="MF_01241">
    <property type="entry name" value="GlcN6P_deamin"/>
    <property type="match status" value="1"/>
</dbReference>
<dbReference type="InterPro" id="IPR006148">
    <property type="entry name" value="Glc/Gal-6P_isomerase"/>
</dbReference>
<dbReference type="InterPro" id="IPR004547">
    <property type="entry name" value="Glucosamine6P_isomerase"/>
</dbReference>
<dbReference type="InterPro" id="IPR018321">
    <property type="entry name" value="Glucosamine6P_isomerase_CS"/>
</dbReference>
<dbReference type="InterPro" id="IPR037171">
    <property type="entry name" value="NagB/RpiA_transferase-like"/>
</dbReference>
<dbReference type="NCBIfam" id="TIGR00502">
    <property type="entry name" value="nagB"/>
    <property type="match status" value="1"/>
</dbReference>
<dbReference type="PANTHER" id="PTHR11280">
    <property type="entry name" value="GLUCOSAMINE-6-PHOSPHATE ISOMERASE"/>
    <property type="match status" value="1"/>
</dbReference>
<dbReference type="PANTHER" id="PTHR11280:SF8">
    <property type="entry name" value="GLUCOSAMINE-6-PHOSPHATE ISOMERASE 1"/>
    <property type="match status" value="1"/>
</dbReference>
<dbReference type="Pfam" id="PF01182">
    <property type="entry name" value="Glucosamine_iso"/>
    <property type="match status" value="1"/>
</dbReference>
<dbReference type="SUPFAM" id="SSF100950">
    <property type="entry name" value="NagB/RpiA/CoA transferase-like"/>
    <property type="match status" value="1"/>
</dbReference>
<dbReference type="PROSITE" id="PS01161">
    <property type="entry name" value="GLC_GALNAC_ISOMERASE"/>
    <property type="match status" value="1"/>
</dbReference>
<keyword id="KW-0007">Acetylation</keyword>
<keyword id="KW-0119">Carbohydrate metabolism</keyword>
<keyword id="KW-0963">Cytoplasm</keyword>
<keyword id="KW-0378">Hydrolase</keyword>
<keyword id="KW-0413">Isomerase</keyword>
<keyword id="KW-0597">Phosphoprotein</keyword>
<keyword id="KW-1185">Reference proteome</keyword>
<evidence type="ECO:0000250" key="1"/>
<evidence type="ECO:0000250" key="2">
    <source>
        <dbReference type="UniProtKB" id="O88958"/>
    </source>
</evidence>
<evidence type="ECO:0000250" key="3">
    <source>
        <dbReference type="UniProtKB" id="P46926"/>
    </source>
</evidence>
<evidence type="ECO:0000269" key="4">
    <source>
    </source>
</evidence>
<evidence type="ECO:0000305" key="5"/>
<evidence type="ECO:0000312" key="6">
    <source>
        <dbReference type="Proteomes" id="UP000189706"/>
    </source>
</evidence>
<protein>
    <recommendedName>
        <fullName evidence="2">Glucosamine-6-phosphate deaminase 1</fullName>
        <shortName>GlcN6P deaminase 1</shortName>
        <ecNumber evidence="3">3.5.99.6</ecNumber>
    </recommendedName>
    <alternativeName>
        <fullName evidence="2">Glucosamine-6-phosphate isomerase 1</fullName>
    </alternativeName>
    <alternativeName>
        <fullName evidence="2">Proetin oscillin</fullName>
    </alternativeName>
</protein>
<comment type="function">
    <text evidence="3 4">Catalyzes the reversible conversion of alpha-D-glucosamine 6-phosphate (GlcN-6P) into beta-D-fructose 6-phosphate (Fru-6P) and ammonium ion, a regulatory reaction step in de novo uridine diphosphate-N-acetyl-alpha-D-glucosamine (UDP-GlcNAc) biosynthesis via hexosamine pathway. Deamination is coupled to aldo-keto isomerization mediating the metabolic flux from UDP-GlcNAc toward Fru-6P. At high ammonium level can drive amination and isomerization of Fru-6P toward hexosamines and UDP-GlcNAc synthesis (By similarity). Has a role in fine tuning the metabolic fluctuations of cytosolic UDP-GlcNAc and their effects on hyaluronan synthesis that occur during tissue remodeling (By similarity). Seems to trigger calcium oscillations in mammalian eggs. These oscillations serve as the essential trigger for egg activation and early development of the embryo (PubMed:8552195).</text>
</comment>
<comment type="catalytic activity">
    <reaction evidence="3">
        <text>alpha-D-glucosamine 6-phosphate + H2O = beta-D-fructose 6-phosphate + NH4(+)</text>
        <dbReference type="Rhea" id="RHEA:12172"/>
        <dbReference type="ChEBI" id="CHEBI:15377"/>
        <dbReference type="ChEBI" id="CHEBI:28938"/>
        <dbReference type="ChEBI" id="CHEBI:57634"/>
        <dbReference type="ChEBI" id="CHEBI:75989"/>
        <dbReference type="EC" id="3.5.99.6"/>
    </reaction>
    <physiologicalReaction direction="left-to-right" evidence="3">
        <dbReference type="Rhea" id="RHEA:12173"/>
    </physiologicalReaction>
    <physiologicalReaction direction="right-to-left" evidence="3">
        <dbReference type="Rhea" id="RHEA:12174"/>
    </physiologicalReaction>
</comment>
<comment type="activity regulation">
    <text evidence="3">Allosterically activated by N-acetylglucosamine-6-phosphate (GlcNAc6P).</text>
</comment>
<comment type="pathway">
    <text evidence="3">Nucleotide-sugar biosynthesis; UDP-N-acetyl-alpha-D-glucosamine biosynthesis; alpha-D-glucosamine 6-phosphate from D-fructose 6-phosphate: step 1/1.</text>
</comment>
<comment type="subunit">
    <text evidence="3">Homohexamer.</text>
</comment>
<comment type="subcellular location">
    <subcellularLocation>
        <location evidence="2">Cytoplasm</location>
    </subcellularLocation>
</comment>
<comment type="tissue specificity">
    <text evidence="4">At the equatorial segment of the sperm head.</text>
</comment>
<comment type="similarity">
    <text evidence="5">Belongs to the glucosamine/galactosamine-6-phosphate isomerase family.</text>
</comment>
<gene>
    <name evidence="3" type="primary">GNPDA1</name>
    <name evidence="3" type="synonym">GNPI</name>
</gene>
<feature type="chain" id="PRO_0000160123" description="Glucosamine-6-phosphate deaminase 1">
    <location>
        <begin position="1"/>
        <end position="289"/>
    </location>
</feature>
<feature type="active site" description="Proton acceptor; for enolization step" evidence="1">
    <location>
        <position position="72"/>
    </location>
</feature>
<feature type="active site" description="For ring-opening step" evidence="1">
    <location>
        <position position="141"/>
    </location>
</feature>
<feature type="active site" description="Proton acceptor; for ring-opening step" evidence="1">
    <location>
        <position position="143"/>
    </location>
</feature>
<feature type="active site" description="For ring-opening step" evidence="1">
    <location>
        <position position="148"/>
    </location>
</feature>
<feature type="modified residue" description="N6-acetyllysine" evidence="3">
    <location>
        <position position="64"/>
    </location>
</feature>
<feature type="modified residue" description="Phosphothreonine" evidence="2">
    <location>
        <position position="161"/>
    </location>
</feature>
<accession>Q64422</accession>